<evidence type="ECO:0000255" key="1">
    <source>
        <dbReference type="HAMAP-Rule" id="MF_00532"/>
    </source>
</evidence>
<evidence type="ECO:0000256" key="2">
    <source>
        <dbReference type="SAM" id="MobiDB-lite"/>
    </source>
</evidence>
<evidence type="ECO:0000305" key="3"/>
<comment type="similarity">
    <text evidence="1">Belongs to the universal ribosomal protein uS9 family.</text>
</comment>
<sequence>MAQVEYRGTGRRKNSVARVRLVPGEGNITVNNRDVREYLPFESLILDLNQPFDVTETKGNYDVLVNVHGGGFTGQAQAIRHGIARALLEADPEYRGSLKRAGLLTRDPRMKERKKPGLKAARRSPQFSKR</sequence>
<name>RS9_STAA9</name>
<feature type="chain" id="PRO_1000081839" description="Small ribosomal subunit protein uS9">
    <location>
        <begin position="1"/>
        <end position="130"/>
    </location>
</feature>
<feature type="region of interest" description="Disordered" evidence="2">
    <location>
        <begin position="99"/>
        <end position="130"/>
    </location>
</feature>
<feature type="compositionally biased region" description="Basic residues" evidence="2">
    <location>
        <begin position="111"/>
        <end position="130"/>
    </location>
</feature>
<keyword id="KW-0687">Ribonucleoprotein</keyword>
<keyword id="KW-0689">Ribosomal protein</keyword>
<proteinExistence type="inferred from homology"/>
<accession>A5IV01</accession>
<dbReference type="EMBL" id="CP000703">
    <property type="protein sequence ID" value="ABQ50024.1"/>
    <property type="molecule type" value="Genomic_DNA"/>
</dbReference>
<dbReference type="RefSeq" id="WP_001790547.1">
    <property type="nucleotide sequence ID" value="NC_009487.1"/>
</dbReference>
<dbReference type="SMR" id="A5IV01"/>
<dbReference type="GeneID" id="98346529"/>
<dbReference type="KEGG" id="saj:SaurJH9_2244"/>
<dbReference type="HOGENOM" id="CLU_046483_2_1_9"/>
<dbReference type="GO" id="GO:0022627">
    <property type="term" value="C:cytosolic small ribosomal subunit"/>
    <property type="evidence" value="ECO:0007669"/>
    <property type="project" value="TreeGrafter"/>
</dbReference>
<dbReference type="GO" id="GO:0003723">
    <property type="term" value="F:RNA binding"/>
    <property type="evidence" value="ECO:0007669"/>
    <property type="project" value="TreeGrafter"/>
</dbReference>
<dbReference type="GO" id="GO:0003735">
    <property type="term" value="F:structural constituent of ribosome"/>
    <property type="evidence" value="ECO:0007669"/>
    <property type="project" value="InterPro"/>
</dbReference>
<dbReference type="GO" id="GO:0006412">
    <property type="term" value="P:translation"/>
    <property type="evidence" value="ECO:0007669"/>
    <property type="project" value="UniProtKB-UniRule"/>
</dbReference>
<dbReference type="FunFam" id="3.30.230.10:FF:000001">
    <property type="entry name" value="30S ribosomal protein S9"/>
    <property type="match status" value="1"/>
</dbReference>
<dbReference type="Gene3D" id="3.30.230.10">
    <property type="match status" value="1"/>
</dbReference>
<dbReference type="HAMAP" id="MF_00532_B">
    <property type="entry name" value="Ribosomal_uS9_B"/>
    <property type="match status" value="1"/>
</dbReference>
<dbReference type="InterPro" id="IPR020568">
    <property type="entry name" value="Ribosomal_Su5_D2-typ_SF"/>
</dbReference>
<dbReference type="InterPro" id="IPR000754">
    <property type="entry name" value="Ribosomal_uS9"/>
</dbReference>
<dbReference type="InterPro" id="IPR023035">
    <property type="entry name" value="Ribosomal_uS9_bac/plastid"/>
</dbReference>
<dbReference type="InterPro" id="IPR020574">
    <property type="entry name" value="Ribosomal_uS9_CS"/>
</dbReference>
<dbReference type="InterPro" id="IPR014721">
    <property type="entry name" value="Ribsml_uS5_D2-typ_fold_subgr"/>
</dbReference>
<dbReference type="NCBIfam" id="NF001099">
    <property type="entry name" value="PRK00132.1"/>
    <property type="match status" value="1"/>
</dbReference>
<dbReference type="PANTHER" id="PTHR21569">
    <property type="entry name" value="RIBOSOMAL PROTEIN S9"/>
    <property type="match status" value="1"/>
</dbReference>
<dbReference type="PANTHER" id="PTHR21569:SF1">
    <property type="entry name" value="SMALL RIBOSOMAL SUBUNIT PROTEIN US9M"/>
    <property type="match status" value="1"/>
</dbReference>
<dbReference type="Pfam" id="PF00380">
    <property type="entry name" value="Ribosomal_S9"/>
    <property type="match status" value="1"/>
</dbReference>
<dbReference type="SUPFAM" id="SSF54211">
    <property type="entry name" value="Ribosomal protein S5 domain 2-like"/>
    <property type="match status" value="1"/>
</dbReference>
<dbReference type="PROSITE" id="PS00360">
    <property type="entry name" value="RIBOSOMAL_S9"/>
    <property type="match status" value="1"/>
</dbReference>
<gene>
    <name evidence="1" type="primary">rpsI</name>
    <name type="ordered locus">SaurJH9_2244</name>
</gene>
<reference key="1">
    <citation type="submission" date="2007-05" db="EMBL/GenBank/DDBJ databases">
        <title>Complete sequence of chromosome of Staphylococcus aureus subsp. aureus JH9.</title>
        <authorList>
            <consortium name="US DOE Joint Genome Institute"/>
            <person name="Copeland A."/>
            <person name="Lucas S."/>
            <person name="Lapidus A."/>
            <person name="Barry K."/>
            <person name="Detter J.C."/>
            <person name="Glavina del Rio T."/>
            <person name="Hammon N."/>
            <person name="Israni S."/>
            <person name="Pitluck S."/>
            <person name="Chain P."/>
            <person name="Malfatti S."/>
            <person name="Shin M."/>
            <person name="Vergez L."/>
            <person name="Schmutz J."/>
            <person name="Larimer F."/>
            <person name="Land M."/>
            <person name="Hauser L."/>
            <person name="Kyrpides N."/>
            <person name="Kim E."/>
            <person name="Tomasz A."/>
            <person name="Richardson P."/>
        </authorList>
    </citation>
    <scope>NUCLEOTIDE SEQUENCE [LARGE SCALE GENOMIC DNA]</scope>
    <source>
        <strain>JH9</strain>
    </source>
</reference>
<organism>
    <name type="scientific">Staphylococcus aureus (strain JH9)</name>
    <dbReference type="NCBI Taxonomy" id="359786"/>
    <lineage>
        <taxon>Bacteria</taxon>
        <taxon>Bacillati</taxon>
        <taxon>Bacillota</taxon>
        <taxon>Bacilli</taxon>
        <taxon>Bacillales</taxon>
        <taxon>Staphylococcaceae</taxon>
        <taxon>Staphylococcus</taxon>
    </lineage>
</organism>
<protein>
    <recommendedName>
        <fullName evidence="1">Small ribosomal subunit protein uS9</fullName>
    </recommendedName>
    <alternativeName>
        <fullName evidence="3">30S ribosomal protein S9</fullName>
    </alternativeName>
</protein>